<keyword id="KW-0963">Cytoplasm</keyword>
<sequence length="84" mass="10413">MNLIPRTSIVVYLKHMKHERQIRKYGHIVHSNRDRKFVIMYVNEQDVDQIVHKLMQLKYVRHIDGSPYKYLKKTYEKEKHEIYN</sequence>
<protein>
    <recommendedName>
        <fullName evidence="1">UPF0298 protein SAS1056</fullName>
    </recommendedName>
</protein>
<accession>Q6GA93</accession>
<proteinExistence type="inferred from homology"/>
<gene>
    <name type="ordered locus">SAS1056</name>
</gene>
<comment type="subcellular location">
    <subcellularLocation>
        <location evidence="1">Cytoplasm</location>
    </subcellularLocation>
</comment>
<comment type="similarity">
    <text evidence="1">Belongs to the UPF0298 family.</text>
</comment>
<organism>
    <name type="scientific">Staphylococcus aureus (strain MSSA476)</name>
    <dbReference type="NCBI Taxonomy" id="282459"/>
    <lineage>
        <taxon>Bacteria</taxon>
        <taxon>Bacillati</taxon>
        <taxon>Bacillota</taxon>
        <taxon>Bacilli</taxon>
        <taxon>Bacillales</taxon>
        <taxon>Staphylococcaceae</taxon>
        <taxon>Staphylococcus</taxon>
    </lineage>
</organism>
<name>Y1056_STAAS</name>
<reference key="1">
    <citation type="journal article" date="2004" name="Proc. Natl. Acad. Sci. U.S.A.">
        <title>Complete genomes of two clinical Staphylococcus aureus strains: evidence for the rapid evolution of virulence and drug resistance.</title>
        <authorList>
            <person name="Holden M.T.G."/>
            <person name="Feil E.J."/>
            <person name="Lindsay J.A."/>
            <person name="Peacock S.J."/>
            <person name="Day N.P.J."/>
            <person name="Enright M.C."/>
            <person name="Foster T.J."/>
            <person name="Moore C.E."/>
            <person name="Hurst L."/>
            <person name="Atkin R."/>
            <person name="Barron A."/>
            <person name="Bason N."/>
            <person name="Bentley S.D."/>
            <person name="Chillingworth C."/>
            <person name="Chillingworth T."/>
            <person name="Churcher C."/>
            <person name="Clark L."/>
            <person name="Corton C."/>
            <person name="Cronin A."/>
            <person name="Doggett J."/>
            <person name="Dowd L."/>
            <person name="Feltwell T."/>
            <person name="Hance Z."/>
            <person name="Harris B."/>
            <person name="Hauser H."/>
            <person name="Holroyd S."/>
            <person name="Jagels K."/>
            <person name="James K.D."/>
            <person name="Lennard N."/>
            <person name="Line A."/>
            <person name="Mayes R."/>
            <person name="Moule S."/>
            <person name="Mungall K."/>
            <person name="Ormond D."/>
            <person name="Quail M.A."/>
            <person name="Rabbinowitsch E."/>
            <person name="Rutherford K.M."/>
            <person name="Sanders M."/>
            <person name="Sharp S."/>
            <person name="Simmonds M."/>
            <person name="Stevens K."/>
            <person name="Whitehead S."/>
            <person name="Barrell B.G."/>
            <person name="Spratt B.G."/>
            <person name="Parkhill J."/>
        </authorList>
    </citation>
    <scope>NUCLEOTIDE SEQUENCE [LARGE SCALE GENOMIC DNA]</scope>
    <source>
        <strain>MSSA476</strain>
    </source>
</reference>
<evidence type="ECO:0000255" key="1">
    <source>
        <dbReference type="HAMAP-Rule" id="MF_01126"/>
    </source>
</evidence>
<dbReference type="EMBL" id="BX571857">
    <property type="protein sequence ID" value="CAG42830.1"/>
    <property type="molecule type" value="Genomic_DNA"/>
</dbReference>
<dbReference type="RefSeq" id="WP_001049150.1">
    <property type="nucleotide sequence ID" value="NC_002953.3"/>
</dbReference>
<dbReference type="SMR" id="Q6GA93"/>
<dbReference type="KEGG" id="sas:SAS1056"/>
<dbReference type="HOGENOM" id="CLU_159890_2_1_9"/>
<dbReference type="GO" id="GO:0005737">
    <property type="term" value="C:cytoplasm"/>
    <property type="evidence" value="ECO:0007669"/>
    <property type="project" value="UniProtKB-SubCell"/>
</dbReference>
<dbReference type="HAMAP" id="MF_01126">
    <property type="entry name" value="UPF0298"/>
    <property type="match status" value="1"/>
</dbReference>
<dbReference type="InterPro" id="IPR016979">
    <property type="entry name" value="DUF2129"/>
</dbReference>
<dbReference type="Pfam" id="PF09902">
    <property type="entry name" value="DUF2129"/>
    <property type="match status" value="1"/>
</dbReference>
<dbReference type="PIRSF" id="PIRSF031653">
    <property type="entry name" value="UCP031653"/>
    <property type="match status" value="1"/>
</dbReference>
<feature type="chain" id="PRO_0000074667" description="UPF0298 protein SAS1056">
    <location>
        <begin position="1"/>
        <end position="84"/>
    </location>
</feature>